<reference key="1">
    <citation type="journal article" date="1998" name="Theor. Appl. Genet.">
        <title>Characterization of two rice genes for nuclear-encoded chloroplast ribosomal protein L12 and phylogenetic analysis of the acquisition of transit peptides and gene duplication.</title>
        <authorList>
            <person name="Kusaka M."/>
            <person name="Kurashige M."/>
            <person name="Hirai A."/>
            <person name="Tsutsumi N."/>
        </authorList>
        <dbReference type="AGRICOLA" id="IND21967357"/>
    </citation>
    <scope>NUCLEOTIDE SEQUENCE [GENOMIC DNA]</scope>
    <source>
        <strain>cv. Nipponbare</strain>
        <tissue>Leaf</tissue>
    </source>
</reference>
<reference key="2">
    <citation type="submission" date="1997-06" db="EMBL/GenBank/DDBJ databases">
        <title>Characterization of homologue of ribosomal protein L12 gene from rice.</title>
        <authorList>
            <person name="Lee J.S."/>
        </authorList>
    </citation>
    <scope>NUCLEOTIDE SEQUENCE [MRNA] (ISOFORM 2)</scope>
    <source>
        <strain>cv. Ilpoom</strain>
        <tissue>Seedling</tissue>
    </source>
</reference>
<reference key="3">
    <citation type="journal article" date="2002" name="Nature">
        <title>The genome sequence and structure of rice chromosome 1.</title>
        <authorList>
            <person name="Sasaki T."/>
            <person name="Matsumoto T."/>
            <person name="Yamamoto K."/>
            <person name="Sakata K."/>
            <person name="Baba T."/>
            <person name="Katayose Y."/>
            <person name="Wu J."/>
            <person name="Niimura Y."/>
            <person name="Cheng Z."/>
            <person name="Nagamura Y."/>
            <person name="Antonio B.A."/>
            <person name="Kanamori H."/>
            <person name="Hosokawa S."/>
            <person name="Masukawa M."/>
            <person name="Arikawa K."/>
            <person name="Chiden Y."/>
            <person name="Hayashi M."/>
            <person name="Okamoto M."/>
            <person name="Ando T."/>
            <person name="Aoki H."/>
            <person name="Arita K."/>
            <person name="Hamada M."/>
            <person name="Harada C."/>
            <person name="Hijishita S."/>
            <person name="Honda M."/>
            <person name="Ichikawa Y."/>
            <person name="Idonuma A."/>
            <person name="Iijima M."/>
            <person name="Ikeda M."/>
            <person name="Ikeno M."/>
            <person name="Ito S."/>
            <person name="Ito T."/>
            <person name="Ito Y."/>
            <person name="Ito Y."/>
            <person name="Iwabuchi A."/>
            <person name="Kamiya K."/>
            <person name="Karasawa W."/>
            <person name="Katagiri S."/>
            <person name="Kikuta A."/>
            <person name="Kobayashi N."/>
            <person name="Kono I."/>
            <person name="Machita K."/>
            <person name="Maehara T."/>
            <person name="Mizuno H."/>
            <person name="Mizubayashi T."/>
            <person name="Mukai Y."/>
            <person name="Nagasaki H."/>
            <person name="Nakashima M."/>
            <person name="Nakama Y."/>
            <person name="Nakamichi Y."/>
            <person name="Nakamura M."/>
            <person name="Namiki N."/>
            <person name="Negishi M."/>
            <person name="Ohta I."/>
            <person name="Ono N."/>
            <person name="Saji S."/>
            <person name="Sakai K."/>
            <person name="Shibata M."/>
            <person name="Shimokawa T."/>
            <person name="Shomura A."/>
            <person name="Song J."/>
            <person name="Takazaki Y."/>
            <person name="Terasawa K."/>
            <person name="Tsuji K."/>
            <person name="Waki K."/>
            <person name="Yamagata H."/>
            <person name="Yamane H."/>
            <person name="Yoshiki S."/>
            <person name="Yoshihara R."/>
            <person name="Yukawa K."/>
            <person name="Zhong H."/>
            <person name="Iwama H."/>
            <person name="Endo T."/>
            <person name="Ito H."/>
            <person name="Hahn J.H."/>
            <person name="Kim H.-I."/>
            <person name="Eun M.-Y."/>
            <person name="Yano M."/>
            <person name="Jiang J."/>
            <person name="Gojobori T."/>
        </authorList>
    </citation>
    <scope>NUCLEOTIDE SEQUENCE [LARGE SCALE GENOMIC DNA]</scope>
    <source>
        <strain>cv. Nipponbare</strain>
    </source>
</reference>
<reference key="4">
    <citation type="journal article" date="2005" name="Nature">
        <title>The map-based sequence of the rice genome.</title>
        <authorList>
            <consortium name="International rice genome sequencing project (IRGSP)"/>
        </authorList>
    </citation>
    <scope>NUCLEOTIDE SEQUENCE [LARGE SCALE GENOMIC DNA]</scope>
    <source>
        <strain>cv. Nipponbare</strain>
    </source>
</reference>
<reference key="5">
    <citation type="journal article" date="2013" name="Rice">
        <title>Improvement of the Oryza sativa Nipponbare reference genome using next generation sequence and optical map data.</title>
        <authorList>
            <person name="Kawahara Y."/>
            <person name="de la Bastide M."/>
            <person name="Hamilton J.P."/>
            <person name="Kanamori H."/>
            <person name="McCombie W.R."/>
            <person name="Ouyang S."/>
            <person name="Schwartz D.C."/>
            <person name="Tanaka T."/>
            <person name="Wu J."/>
            <person name="Zhou S."/>
            <person name="Childs K.L."/>
            <person name="Davidson R.M."/>
            <person name="Lin H."/>
            <person name="Quesada-Ocampo L."/>
            <person name="Vaillancourt B."/>
            <person name="Sakai H."/>
            <person name="Lee S.S."/>
            <person name="Kim J."/>
            <person name="Numa H."/>
            <person name="Itoh T."/>
            <person name="Buell C.R."/>
            <person name="Matsumoto T."/>
        </authorList>
    </citation>
    <scope>GENOME REANNOTATION</scope>
    <source>
        <strain>cv. Nipponbare</strain>
    </source>
</reference>
<name>RK12_ORYSJ</name>
<organism>
    <name type="scientific">Oryza sativa subsp. japonica</name>
    <name type="common">Rice</name>
    <dbReference type="NCBI Taxonomy" id="39947"/>
    <lineage>
        <taxon>Eukaryota</taxon>
        <taxon>Viridiplantae</taxon>
        <taxon>Streptophyta</taxon>
        <taxon>Embryophyta</taxon>
        <taxon>Tracheophyta</taxon>
        <taxon>Spermatophyta</taxon>
        <taxon>Magnoliopsida</taxon>
        <taxon>Liliopsida</taxon>
        <taxon>Poales</taxon>
        <taxon>Poaceae</taxon>
        <taxon>BOP clade</taxon>
        <taxon>Oryzoideae</taxon>
        <taxon>Oryzeae</taxon>
        <taxon>Oryzinae</taxon>
        <taxon>Oryza</taxon>
        <taxon>Oryza sativa</taxon>
    </lineage>
</organism>
<protein>
    <recommendedName>
        <fullName evidence="3">Large ribosomal subunit protein bL12c</fullName>
    </recommendedName>
    <alternativeName>
        <fullName>50S ribosomal protein L12, chloroplastic</fullName>
    </alternativeName>
    <alternativeName>
        <fullName>CL12</fullName>
    </alternativeName>
</protein>
<accession>O22386</accession>
<accession>Q5SN25</accession>
<accession>Q9ZWF4</accession>
<dbReference type="EMBL" id="AB022674">
    <property type="protein sequence ID" value="BAA37171.1"/>
    <property type="molecule type" value="Genomic_DNA"/>
</dbReference>
<dbReference type="EMBL" id="AF010581">
    <property type="protein sequence ID" value="AAB66886.1"/>
    <property type="molecule type" value="mRNA"/>
</dbReference>
<dbReference type="EMBL" id="AP003284">
    <property type="protein sequence ID" value="BAD72371.1"/>
    <property type="status" value="ALT_SEQ"/>
    <property type="molecule type" value="Genomic_DNA"/>
</dbReference>
<dbReference type="EMBL" id="AP014957">
    <property type="status" value="NOT_ANNOTATED_CDS"/>
    <property type="molecule type" value="Genomic_DNA"/>
</dbReference>
<dbReference type="PIR" id="PC4267">
    <property type="entry name" value="PC4267"/>
</dbReference>
<dbReference type="RefSeq" id="XP_015624137.1">
    <property type="nucleotide sequence ID" value="XM_015768651.1"/>
</dbReference>
<dbReference type="SMR" id="O22386"/>
<dbReference type="FunCoup" id="O22386">
    <property type="interactions" value="904"/>
</dbReference>
<dbReference type="STRING" id="39947.O22386"/>
<dbReference type="PaxDb" id="39947-O22386"/>
<dbReference type="EnsemblPlants" id="Os01t0662300-02">
    <molecule id="O22386-1"/>
    <property type="protein sequence ID" value="Os01t0662300-02"/>
    <property type="gene ID" value="Os01g0662300"/>
</dbReference>
<dbReference type="Gramene" id="Os01t0662300-02">
    <molecule id="O22386-1"/>
    <property type="protein sequence ID" value="Os01t0662300-02"/>
    <property type="gene ID" value="Os01g0662300"/>
</dbReference>
<dbReference type="eggNOG" id="KOG1715">
    <property type="taxonomic scope" value="Eukaryota"/>
</dbReference>
<dbReference type="InParanoid" id="O22386"/>
<dbReference type="OrthoDB" id="250175at2759"/>
<dbReference type="Proteomes" id="UP000000763">
    <property type="component" value="Chromosome 1"/>
</dbReference>
<dbReference type="Proteomes" id="UP000059680">
    <property type="component" value="Chromosome 1"/>
</dbReference>
<dbReference type="GO" id="GO:0009507">
    <property type="term" value="C:chloroplast"/>
    <property type="evidence" value="ECO:0007669"/>
    <property type="project" value="UniProtKB-SubCell"/>
</dbReference>
<dbReference type="GO" id="GO:1990904">
    <property type="term" value="C:ribonucleoprotein complex"/>
    <property type="evidence" value="ECO:0007669"/>
    <property type="project" value="UniProtKB-KW"/>
</dbReference>
<dbReference type="GO" id="GO:0005840">
    <property type="term" value="C:ribosome"/>
    <property type="evidence" value="ECO:0007669"/>
    <property type="project" value="UniProtKB-KW"/>
</dbReference>
<dbReference type="GO" id="GO:0003729">
    <property type="term" value="F:mRNA binding"/>
    <property type="evidence" value="ECO:0000318"/>
    <property type="project" value="GO_Central"/>
</dbReference>
<dbReference type="GO" id="GO:0003735">
    <property type="term" value="F:structural constituent of ribosome"/>
    <property type="evidence" value="ECO:0000318"/>
    <property type="project" value="GO_Central"/>
</dbReference>
<dbReference type="GO" id="GO:0006412">
    <property type="term" value="P:translation"/>
    <property type="evidence" value="ECO:0000318"/>
    <property type="project" value="GO_Central"/>
</dbReference>
<dbReference type="CDD" id="cd00387">
    <property type="entry name" value="Ribosomal_L7_L12"/>
    <property type="match status" value="1"/>
</dbReference>
<dbReference type="FunFam" id="3.30.1390.10:FF:000001">
    <property type="entry name" value="50S ribosomal protein L7/L12"/>
    <property type="match status" value="1"/>
</dbReference>
<dbReference type="Gene3D" id="3.30.1390.10">
    <property type="match status" value="1"/>
</dbReference>
<dbReference type="Gene3D" id="1.20.5.710">
    <property type="entry name" value="Single helix bin"/>
    <property type="match status" value="1"/>
</dbReference>
<dbReference type="HAMAP" id="MF_00368">
    <property type="entry name" value="Ribosomal_bL12"/>
    <property type="match status" value="1"/>
</dbReference>
<dbReference type="InterPro" id="IPR000206">
    <property type="entry name" value="Ribosomal_bL12"/>
</dbReference>
<dbReference type="InterPro" id="IPR013823">
    <property type="entry name" value="Ribosomal_bL12_C"/>
</dbReference>
<dbReference type="InterPro" id="IPR014719">
    <property type="entry name" value="Ribosomal_bL12_C/ClpS-like"/>
</dbReference>
<dbReference type="InterPro" id="IPR008932">
    <property type="entry name" value="Ribosomal_bL12_oligo"/>
</dbReference>
<dbReference type="InterPro" id="IPR036235">
    <property type="entry name" value="Ribosomal_bL12_oligo_N_sf"/>
</dbReference>
<dbReference type="NCBIfam" id="TIGR00855">
    <property type="entry name" value="L12"/>
    <property type="match status" value="1"/>
</dbReference>
<dbReference type="PANTHER" id="PTHR45987">
    <property type="entry name" value="39S RIBOSOMAL PROTEIN L12"/>
    <property type="match status" value="1"/>
</dbReference>
<dbReference type="PANTHER" id="PTHR45987:SF25">
    <property type="entry name" value="LARGE RIBOSOMAL SUBUNIT PROTEIN BL12C"/>
    <property type="match status" value="1"/>
</dbReference>
<dbReference type="Pfam" id="PF00542">
    <property type="entry name" value="Ribosomal_L12"/>
    <property type="match status" value="1"/>
</dbReference>
<dbReference type="Pfam" id="PF16320">
    <property type="entry name" value="Ribosomal_L12_N"/>
    <property type="match status" value="1"/>
</dbReference>
<dbReference type="SUPFAM" id="SSF54736">
    <property type="entry name" value="ClpS-like"/>
    <property type="match status" value="1"/>
</dbReference>
<dbReference type="SUPFAM" id="SSF48300">
    <property type="entry name" value="Ribosomal protein L7/12, oligomerisation (N-terminal) domain"/>
    <property type="match status" value="1"/>
</dbReference>
<proteinExistence type="evidence at transcript level"/>
<feature type="transit peptide" description="Chloroplast" evidence="1">
    <location>
        <begin position="1"/>
        <end position="47"/>
    </location>
</feature>
<feature type="chain" id="PRO_0000030451" description="Large ribosomal subunit protein bL12c">
    <location>
        <begin position="48"/>
        <end position="185"/>
    </location>
</feature>
<feature type="splice variant" id="VSP_019482" description="In isoform 2." evidence="2">
    <location>
        <begin position="90"/>
        <end position="107"/>
    </location>
</feature>
<feature type="sequence conflict" description="In Ref. 2; AAB66886." evidence="3" ref="2">
    <original>E</original>
    <variation>D</variation>
    <location>
        <position position="53"/>
    </location>
</feature>
<comment type="subcellular location">
    <subcellularLocation>
        <location>Plastid</location>
        <location>Chloroplast</location>
    </subcellularLocation>
</comment>
<comment type="alternative products">
    <event type="alternative splicing"/>
    <isoform>
        <id>O22386-1</id>
        <name>1</name>
        <sequence type="displayed"/>
    </isoform>
    <isoform>
        <id>O22386-2</id>
        <name>2</name>
        <sequence type="described" ref="VSP_019482"/>
    </isoform>
</comment>
<comment type="miscellaneous">
    <molecule>Isoform 2</molecule>
    <text evidence="3">Incomplete sequence.</text>
</comment>
<comment type="similarity">
    <text evidence="3">Belongs to the bacterial ribosomal protein bL12 family.</text>
</comment>
<comment type="sequence caution" evidence="3">
    <conflict type="erroneous gene model prediction">
        <sequence resource="EMBL-CDS" id="BAD72371"/>
    </conflict>
</comment>
<keyword id="KW-0025">Alternative splicing</keyword>
<keyword id="KW-0150">Chloroplast</keyword>
<keyword id="KW-0934">Plastid</keyword>
<keyword id="KW-1185">Reference proteome</keyword>
<keyword id="KW-0687">Ribonucleoprotein</keyword>
<keyword id="KW-0689">Ribosomal protein</keyword>
<keyword id="KW-0809">Transit peptide</keyword>
<evidence type="ECO:0000255" key="1"/>
<evidence type="ECO:0000303" key="2">
    <source ref="2"/>
</evidence>
<evidence type="ECO:0000305" key="3"/>
<sequence>MASTALSSAFSLLSLPSSSSPAAAAAAAPRSFAVPSRARPRRAVAVVASTATESPKVLELGDAIAGLTLEEARGLVDHLQERLGVSAAAFAPAAVVAAPGAGGAGAAADEAPAEKTEFDVVIEEVPSSARIASIKVVRALTNLALKEAKDLIEGLPKKVKEGVSKDEAEDAKKQLEEVGAKVSIA</sequence>
<gene>
    <name type="primary">RPL12-2</name>
    <name type="ordered locus">Os01g0662300</name>
    <name type="ordered locus">LOC_Os01g47330</name>
    <name type="ORF">P0671D01.26</name>
</gene>